<gene>
    <name evidence="1" type="primary">polC</name>
    <name type="ordered locus">lin1357</name>
</gene>
<dbReference type="EC" id="2.7.7.7" evidence="1"/>
<dbReference type="EMBL" id="AL596168">
    <property type="protein sequence ID" value="CAC96588.1"/>
    <property type="molecule type" value="Genomic_DNA"/>
</dbReference>
<dbReference type="PIR" id="AD1602">
    <property type="entry name" value="AD1602"/>
</dbReference>
<dbReference type="RefSeq" id="WP_003762047.1">
    <property type="nucleotide sequence ID" value="NC_003212.1"/>
</dbReference>
<dbReference type="SMR" id="Q92C34"/>
<dbReference type="STRING" id="272626.gene:17565688"/>
<dbReference type="GeneID" id="93234737"/>
<dbReference type="KEGG" id="lin:polC"/>
<dbReference type="eggNOG" id="COG2176">
    <property type="taxonomic scope" value="Bacteria"/>
</dbReference>
<dbReference type="HOGENOM" id="CLU_003297_0_0_9"/>
<dbReference type="OrthoDB" id="9804290at2"/>
<dbReference type="Proteomes" id="UP000002513">
    <property type="component" value="Chromosome"/>
</dbReference>
<dbReference type="GO" id="GO:0005737">
    <property type="term" value="C:cytoplasm"/>
    <property type="evidence" value="ECO:0007669"/>
    <property type="project" value="UniProtKB-SubCell"/>
</dbReference>
<dbReference type="GO" id="GO:0008408">
    <property type="term" value="F:3'-5' exonuclease activity"/>
    <property type="evidence" value="ECO:0007669"/>
    <property type="project" value="UniProtKB-UniRule"/>
</dbReference>
<dbReference type="GO" id="GO:0003677">
    <property type="term" value="F:DNA binding"/>
    <property type="evidence" value="ECO:0007669"/>
    <property type="project" value="UniProtKB-UniRule"/>
</dbReference>
<dbReference type="GO" id="GO:0003887">
    <property type="term" value="F:DNA-directed DNA polymerase activity"/>
    <property type="evidence" value="ECO:0007669"/>
    <property type="project" value="UniProtKB-UniRule"/>
</dbReference>
<dbReference type="GO" id="GO:0006261">
    <property type="term" value="P:DNA-templated DNA replication"/>
    <property type="evidence" value="ECO:0007669"/>
    <property type="project" value="UniProtKB-UniRule"/>
</dbReference>
<dbReference type="CDD" id="cd06127">
    <property type="entry name" value="DEDDh"/>
    <property type="match status" value="1"/>
</dbReference>
<dbReference type="CDD" id="cd07435">
    <property type="entry name" value="PHP_PolIIIA_POLC"/>
    <property type="match status" value="1"/>
</dbReference>
<dbReference type="CDD" id="cd04484">
    <property type="entry name" value="polC_OBF"/>
    <property type="match status" value="1"/>
</dbReference>
<dbReference type="FunFam" id="3.30.420.10:FF:000045">
    <property type="entry name" value="3'-5' exonuclease DinG"/>
    <property type="match status" value="1"/>
</dbReference>
<dbReference type="Gene3D" id="1.10.150.870">
    <property type="match status" value="1"/>
</dbReference>
<dbReference type="Gene3D" id="3.30.1900.20">
    <property type="match status" value="2"/>
</dbReference>
<dbReference type="Gene3D" id="6.10.140.1510">
    <property type="match status" value="1"/>
</dbReference>
<dbReference type="Gene3D" id="3.20.20.140">
    <property type="entry name" value="Metal-dependent hydrolases"/>
    <property type="match status" value="1"/>
</dbReference>
<dbReference type="Gene3D" id="2.40.50.140">
    <property type="entry name" value="Nucleic acid-binding proteins"/>
    <property type="match status" value="1"/>
</dbReference>
<dbReference type="Gene3D" id="1.10.150.700">
    <property type="entry name" value="PolC, middle finger domain"/>
    <property type="match status" value="1"/>
</dbReference>
<dbReference type="Gene3D" id="3.30.420.10">
    <property type="entry name" value="Ribonuclease H-like superfamily/Ribonuclease H"/>
    <property type="match status" value="1"/>
</dbReference>
<dbReference type="HAMAP" id="MF_00356">
    <property type="entry name" value="DNApol_PolC"/>
    <property type="match status" value="1"/>
</dbReference>
<dbReference type="InterPro" id="IPR011708">
    <property type="entry name" value="DNA_pol3_alpha_NTPase_dom"/>
</dbReference>
<dbReference type="InterPro" id="IPR040982">
    <property type="entry name" value="DNA_pol3_finger"/>
</dbReference>
<dbReference type="InterPro" id="IPR024754">
    <property type="entry name" value="DNA_PolC-like_N_II"/>
</dbReference>
<dbReference type="InterPro" id="IPR028112">
    <property type="entry name" value="DNA_PolC-type_N_I"/>
</dbReference>
<dbReference type="InterPro" id="IPR004805">
    <property type="entry name" value="DnaE2/DnaE/PolC"/>
</dbReference>
<dbReference type="InterPro" id="IPR029460">
    <property type="entry name" value="DNAPol_HHH"/>
</dbReference>
<dbReference type="InterPro" id="IPR006054">
    <property type="entry name" value="DnaQ"/>
</dbReference>
<dbReference type="InterPro" id="IPR013520">
    <property type="entry name" value="Exonuclease_RNaseT/DNA_pol3"/>
</dbReference>
<dbReference type="InterPro" id="IPR012340">
    <property type="entry name" value="NA-bd_OB-fold"/>
</dbReference>
<dbReference type="InterPro" id="IPR004365">
    <property type="entry name" value="NA-bd_OB_tRNA"/>
</dbReference>
<dbReference type="InterPro" id="IPR004013">
    <property type="entry name" value="PHP_dom"/>
</dbReference>
<dbReference type="InterPro" id="IPR003141">
    <property type="entry name" value="Pol/His_phosphatase_N"/>
</dbReference>
<dbReference type="InterPro" id="IPR006308">
    <property type="entry name" value="Pol_III_a_PolC-type_gram_pos"/>
</dbReference>
<dbReference type="InterPro" id="IPR044923">
    <property type="entry name" value="PolC_middle_finger_sf"/>
</dbReference>
<dbReference type="InterPro" id="IPR012337">
    <property type="entry name" value="RNaseH-like_sf"/>
</dbReference>
<dbReference type="InterPro" id="IPR036397">
    <property type="entry name" value="RNaseH_sf"/>
</dbReference>
<dbReference type="NCBIfam" id="TIGR00573">
    <property type="entry name" value="dnaq"/>
    <property type="match status" value="1"/>
</dbReference>
<dbReference type="NCBIfam" id="TIGR01405">
    <property type="entry name" value="polC_Gram_pos"/>
    <property type="match status" value="1"/>
</dbReference>
<dbReference type="NCBIfam" id="NF001688">
    <property type="entry name" value="PRK00448.1"/>
    <property type="match status" value="1"/>
</dbReference>
<dbReference type="PANTHER" id="PTHR32294:SF5">
    <property type="entry name" value="DNA POLYMERASE III POLC-TYPE"/>
    <property type="match status" value="1"/>
</dbReference>
<dbReference type="PANTHER" id="PTHR32294">
    <property type="entry name" value="DNA POLYMERASE III SUBUNIT ALPHA"/>
    <property type="match status" value="1"/>
</dbReference>
<dbReference type="Pfam" id="PF14480">
    <property type="entry name" value="DNA_pol3_a_NI"/>
    <property type="match status" value="1"/>
</dbReference>
<dbReference type="Pfam" id="PF11490">
    <property type="entry name" value="DNA_pol3_a_NII"/>
    <property type="match status" value="1"/>
</dbReference>
<dbReference type="Pfam" id="PF07733">
    <property type="entry name" value="DNA_pol3_alpha"/>
    <property type="match status" value="2"/>
</dbReference>
<dbReference type="Pfam" id="PF17657">
    <property type="entry name" value="DNA_pol3_finger"/>
    <property type="match status" value="1"/>
</dbReference>
<dbReference type="Pfam" id="PF14579">
    <property type="entry name" value="HHH_6"/>
    <property type="match status" value="1"/>
</dbReference>
<dbReference type="Pfam" id="PF02811">
    <property type="entry name" value="PHP"/>
    <property type="match status" value="1"/>
</dbReference>
<dbReference type="Pfam" id="PF00929">
    <property type="entry name" value="RNase_T"/>
    <property type="match status" value="1"/>
</dbReference>
<dbReference type="Pfam" id="PF01336">
    <property type="entry name" value="tRNA_anti-codon"/>
    <property type="match status" value="1"/>
</dbReference>
<dbReference type="SMART" id="SM00479">
    <property type="entry name" value="EXOIII"/>
    <property type="match status" value="1"/>
</dbReference>
<dbReference type="SMART" id="SM00481">
    <property type="entry name" value="POLIIIAc"/>
    <property type="match status" value="1"/>
</dbReference>
<dbReference type="SUPFAM" id="SSF50249">
    <property type="entry name" value="Nucleic acid-binding proteins"/>
    <property type="match status" value="1"/>
</dbReference>
<dbReference type="SUPFAM" id="SSF53098">
    <property type="entry name" value="Ribonuclease H-like"/>
    <property type="match status" value="1"/>
</dbReference>
<reference key="1">
    <citation type="journal article" date="2001" name="Science">
        <title>Comparative genomics of Listeria species.</title>
        <authorList>
            <person name="Glaser P."/>
            <person name="Frangeul L."/>
            <person name="Buchrieser C."/>
            <person name="Rusniok C."/>
            <person name="Amend A."/>
            <person name="Baquero F."/>
            <person name="Berche P."/>
            <person name="Bloecker H."/>
            <person name="Brandt P."/>
            <person name="Chakraborty T."/>
            <person name="Charbit A."/>
            <person name="Chetouani F."/>
            <person name="Couve E."/>
            <person name="de Daruvar A."/>
            <person name="Dehoux P."/>
            <person name="Domann E."/>
            <person name="Dominguez-Bernal G."/>
            <person name="Duchaud E."/>
            <person name="Durant L."/>
            <person name="Dussurget O."/>
            <person name="Entian K.-D."/>
            <person name="Fsihi H."/>
            <person name="Garcia-del Portillo F."/>
            <person name="Garrido P."/>
            <person name="Gautier L."/>
            <person name="Goebel W."/>
            <person name="Gomez-Lopez N."/>
            <person name="Hain T."/>
            <person name="Hauf J."/>
            <person name="Jackson D."/>
            <person name="Jones L.-M."/>
            <person name="Kaerst U."/>
            <person name="Kreft J."/>
            <person name="Kuhn M."/>
            <person name="Kunst F."/>
            <person name="Kurapkat G."/>
            <person name="Madueno E."/>
            <person name="Maitournam A."/>
            <person name="Mata Vicente J."/>
            <person name="Ng E."/>
            <person name="Nedjari H."/>
            <person name="Nordsiek G."/>
            <person name="Novella S."/>
            <person name="de Pablos B."/>
            <person name="Perez-Diaz J.-C."/>
            <person name="Purcell R."/>
            <person name="Remmel B."/>
            <person name="Rose M."/>
            <person name="Schlueter T."/>
            <person name="Simoes N."/>
            <person name="Tierrez A."/>
            <person name="Vazquez-Boland J.-A."/>
            <person name="Voss H."/>
            <person name="Wehland J."/>
            <person name="Cossart P."/>
        </authorList>
    </citation>
    <scope>NUCLEOTIDE SEQUENCE [LARGE SCALE GENOMIC DNA]</scope>
    <source>
        <strain>ATCC BAA-680 / CLIP 11262</strain>
    </source>
</reference>
<feature type="chain" id="PRO_0000204579" description="DNA polymerase III PolC-type">
    <location>
        <begin position="1"/>
        <end position="1444"/>
    </location>
</feature>
<feature type="domain" description="Exonuclease">
    <location>
        <begin position="428"/>
        <end position="584"/>
    </location>
</feature>
<sequence>MTAKEEEKQERFQLLMTQIGLQDVTTYEEFTKDAKIEKLVADKKNKTWQFHLHVPQIFPAALFHMMDVGMKRAFSQIAETEMQIVPENQTINETLIQEYWNLIVEPIGKQSPMIGKLLMEQKPTFKEPHFIEVAVHNDMEEATIQQRFQAKIIENYGKAGFPRLAMKMHMLDQSETDEYKAFAQAKQEEDQKKAAEAVQVMQKRQAEGQNGSANAAPLTGPFQIGYKIKDDEEIKRLGDVYDEERRITVQGLIFATEIRELRSGRSLLQFKITDYTSSMIIKMFSRDNEDAAMFQNLKKGMWVKVRGSVQNDTFVRDLIMMAQDINEIAGVKRLDTAEEKRAELHLHSPMSQMDATSSVDSLFKQAADWGHKAIAITDHSVAQSFPEAYGAGQKYGLKVIFGIEANLIDDGVPIAYNDQHIALEDATYCVFDVETTGLSAVYDTIIELAGVKMKNGEIIDKFEAFIDPGHPLSATTINLTGITDDMVKGSDPIDVVLKQFREWSGDDILVAHNASFDMGFINTAYEKVGLEKAKNAVVDTLELARFLYPHFKNHRLNTLTKKFNIILEQHHRAVFDAEATAYLAWKLIKDAKEMHDIEFHDSLNDYMGEGDAYKRARPFHATIYAQTDVGLKNLFKLITMSNINYFYRVPRIPRSQLKKMREGLIIGTACSQGELFEAMMQKGMQAAEKVAEFYDFIEVQPKPVYAPLIERELVRDEKALEEILKNIVRVGEKTGKPVVATGNVHYKDPVDKIYRKILIHSQGGANPLNRAELPDVHFRSTDEMLKEFAFLGEEKAKEIVVTNSNLVVDWMDDLKPIKDELYTPKIDGAEDEVRNMSYGMAHQLYGEKLPEIVEARLEKELKSIIGHGFAVIYLISHKLVKKSLVDGYLVGSRGSVGSSFVATMTEITEVNPLPPHYLCPNCKDSEFFDDGSVGSGFDLPDKDCPHCGTPYQKEGQDIPFETFLGFKGDKVPDIDLNFSGDYQPVAHAYTKEIFGEDYVFRAGTIGTVAEKTAFGYVRNYERDMNMTIRGAEVDRLVAGCTGVKRTTGQHPGGIIVIPDYMDVYDFTPVQFPADATDSEWKTTHFDFHSIHDNVLKLDILGHDDPTAIRMLQDLSGIDPKTIPTDDPDVMKLFGSTESLGVKPADIDSKTGTLGIPEFGTRFVRQMLEQTKPTTFSELVQISGLSHGTDVWLGNAEELIKNKTCELPDVIGCRDDIMVFLIYQGLESSLAFKIMESVRKGKGLTEEMEEAMIANKVPLWYIESCKKIKYMFPKAHAAAYVLMAVRIAYFKVHHPLYFYATYFTVRADDFDLTSMVNGKEAVKATMKEVNDKGMEASTKEKNLLTVLEIANEMLARGFHFQKVDLYKSSADEFIIDGDSLIPPFNAIPSLGTNVAKQIVAARENGEFLSKEDLQQRGKVSKTIIQYMDDQGCLEGLPDQNQLSLF</sequence>
<evidence type="ECO:0000255" key="1">
    <source>
        <dbReference type="HAMAP-Rule" id="MF_00356"/>
    </source>
</evidence>
<organism>
    <name type="scientific">Listeria innocua serovar 6a (strain ATCC BAA-680 / CLIP 11262)</name>
    <dbReference type="NCBI Taxonomy" id="272626"/>
    <lineage>
        <taxon>Bacteria</taxon>
        <taxon>Bacillati</taxon>
        <taxon>Bacillota</taxon>
        <taxon>Bacilli</taxon>
        <taxon>Bacillales</taxon>
        <taxon>Listeriaceae</taxon>
        <taxon>Listeria</taxon>
    </lineage>
</organism>
<comment type="function">
    <text evidence="1">Required for replicative DNA synthesis. This DNA polymerase also exhibits 3' to 5' exonuclease activity.</text>
</comment>
<comment type="catalytic activity">
    <reaction evidence="1">
        <text>DNA(n) + a 2'-deoxyribonucleoside 5'-triphosphate = DNA(n+1) + diphosphate</text>
        <dbReference type="Rhea" id="RHEA:22508"/>
        <dbReference type="Rhea" id="RHEA-COMP:17339"/>
        <dbReference type="Rhea" id="RHEA-COMP:17340"/>
        <dbReference type="ChEBI" id="CHEBI:33019"/>
        <dbReference type="ChEBI" id="CHEBI:61560"/>
        <dbReference type="ChEBI" id="CHEBI:173112"/>
        <dbReference type="EC" id="2.7.7.7"/>
    </reaction>
</comment>
<comment type="subcellular location">
    <subcellularLocation>
        <location evidence="1">Cytoplasm</location>
    </subcellularLocation>
</comment>
<comment type="similarity">
    <text evidence="1">Belongs to the DNA polymerase type-C family. PolC subfamily.</text>
</comment>
<accession>Q92C34</accession>
<protein>
    <recommendedName>
        <fullName evidence="1">DNA polymerase III PolC-type</fullName>
        <shortName evidence="1">PolIII</shortName>
        <ecNumber evidence="1">2.7.7.7</ecNumber>
    </recommendedName>
</protein>
<proteinExistence type="inferred from homology"/>
<name>DPO3_LISIN</name>
<keyword id="KW-0963">Cytoplasm</keyword>
<keyword id="KW-0235">DNA replication</keyword>
<keyword id="KW-0239">DNA-directed DNA polymerase</keyword>
<keyword id="KW-0269">Exonuclease</keyword>
<keyword id="KW-0378">Hydrolase</keyword>
<keyword id="KW-0540">Nuclease</keyword>
<keyword id="KW-0548">Nucleotidyltransferase</keyword>
<keyword id="KW-0808">Transferase</keyword>